<reference key="1">
    <citation type="journal article" date="2005" name="PLoS Biol.">
        <title>The genome sequence of Rickettsia felis identifies the first putative conjugative plasmid in an obligate intracellular parasite.</title>
        <authorList>
            <person name="Ogata H."/>
            <person name="Renesto P."/>
            <person name="Audic S."/>
            <person name="Robert C."/>
            <person name="Blanc G."/>
            <person name="Fournier P.-E."/>
            <person name="Parinello H."/>
            <person name="Claverie J.-M."/>
            <person name="Raoult D."/>
        </authorList>
    </citation>
    <scope>NUCLEOTIDE SEQUENCE [LARGE SCALE GENOMIC DNA]</scope>
    <source>
        <strain>ATCC VR-1525 / URRWXCal2</strain>
    </source>
</reference>
<keyword id="KW-0997">Cell inner membrane</keyword>
<keyword id="KW-1003">Cell membrane</keyword>
<keyword id="KW-0472">Membrane</keyword>
<keyword id="KW-0812">Transmembrane</keyword>
<keyword id="KW-1133">Transmembrane helix</keyword>
<keyword id="KW-0813">Transport</keyword>
<comment type="subcellular location">
    <subcellularLocation>
        <location evidence="1">Cell inner membrane</location>
        <topology evidence="1">Multi-pass membrane protein</topology>
    </subcellularLocation>
</comment>
<comment type="similarity">
    <text evidence="3">Belongs to the major facilitator superfamily.</text>
</comment>
<sequence length="441" mass="49814">MLNNSHLLIIWLFGLISGFNLMITGNTLNYWLAKEDIALQTIGILSFITLPYSINFLLAPIFDAVQIKYLNKIFGHRLSWICLTSTALIFLIYIFSFLDPRTNLVLFTFTALIISFFSAAQDTILSALRTEIVPKESLGFTSGIYIFGYRIGMLLAGSGAIYLSIYFTFNEIYKIFAGLVFIYLILLIVAARYTNSFGLVEERICHSPSFLCHSRGSGNPNNEFFIKRYYSNFLKIFLDSRFRGNDIKSGNDISLAYFIILILIFLVLYRLPDNLINVMINPFLLHLEYDAFEIASVGKFWGVVGAIIGGLVGGFIMKHKNILNSIFLFGIIHALGHILFIFLEINGKNSLLLFITIGIESITGGMTMTAYIAFISSLCQGKFRATQYSFLSSMMGISRSIFPIISGYMVVNFGWQNFFLFTTIITIPSLLILLKIKTKLQ</sequence>
<proteinExistence type="inferred from homology"/>
<accession>Q4UL88</accession>
<gene>
    <name type="primary">ampG1</name>
    <name type="ordered locus">RF_0834</name>
</gene>
<name>AMPG1_RICFE</name>
<feature type="chain" id="PRO_0000281095" description="Putative transporter AmpG 1">
    <location>
        <begin position="1"/>
        <end position="441"/>
    </location>
</feature>
<feature type="transmembrane region" description="Helical" evidence="2">
    <location>
        <begin position="5"/>
        <end position="25"/>
    </location>
</feature>
<feature type="transmembrane region" description="Helical" evidence="2">
    <location>
        <begin position="42"/>
        <end position="62"/>
    </location>
</feature>
<feature type="transmembrane region" description="Helical" evidence="2">
    <location>
        <begin position="78"/>
        <end position="98"/>
    </location>
</feature>
<feature type="transmembrane region" description="Helical" evidence="2">
    <location>
        <begin position="104"/>
        <end position="124"/>
    </location>
</feature>
<feature type="transmembrane region" description="Helical" evidence="2">
    <location>
        <begin position="143"/>
        <end position="163"/>
    </location>
</feature>
<feature type="transmembrane region" description="Helical" evidence="2">
    <location>
        <begin position="171"/>
        <end position="191"/>
    </location>
</feature>
<feature type="transmembrane region" description="Helical" evidence="2">
    <location>
        <begin position="249"/>
        <end position="269"/>
    </location>
</feature>
<feature type="transmembrane region" description="Helical" evidence="2">
    <location>
        <begin position="297"/>
        <end position="317"/>
    </location>
</feature>
<feature type="transmembrane region" description="Helical" evidence="2">
    <location>
        <begin position="325"/>
        <end position="345"/>
    </location>
</feature>
<feature type="transmembrane region" description="Helical" evidence="2">
    <location>
        <begin position="352"/>
        <end position="372"/>
    </location>
</feature>
<feature type="transmembrane region" description="Helical" evidence="2">
    <location>
        <begin position="390"/>
        <end position="410"/>
    </location>
</feature>
<feature type="transmembrane region" description="Helical" evidence="2">
    <location>
        <begin position="413"/>
        <end position="433"/>
    </location>
</feature>
<dbReference type="EMBL" id="CP000053">
    <property type="protein sequence ID" value="AAY61685.1"/>
    <property type="molecule type" value="Genomic_DNA"/>
</dbReference>
<dbReference type="SMR" id="Q4UL88"/>
<dbReference type="STRING" id="315456.RF_0834"/>
<dbReference type="KEGG" id="rfe:RF_0834"/>
<dbReference type="eggNOG" id="COG2211">
    <property type="taxonomic scope" value="Bacteria"/>
</dbReference>
<dbReference type="HOGENOM" id="CLU_029352_1_2_5"/>
<dbReference type="OrthoDB" id="9787815at2"/>
<dbReference type="Proteomes" id="UP000008548">
    <property type="component" value="Chromosome"/>
</dbReference>
<dbReference type="GO" id="GO:0005886">
    <property type="term" value="C:plasma membrane"/>
    <property type="evidence" value="ECO:0007669"/>
    <property type="project" value="UniProtKB-SubCell"/>
</dbReference>
<dbReference type="GO" id="GO:0022857">
    <property type="term" value="F:transmembrane transporter activity"/>
    <property type="evidence" value="ECO:0007669"/>
    <property type="project" value="InterPro"/>
</dbReference>
<dbReference type="Gene3D" id="1.20.1250.20">
    <property type="entry name" value="MFS general substrate transporter like domains"/>
    <property type="match status" value="2"/>
</dbReference>
<dbReference type="InterPro" id="IPR004752">
    <property type="entry name" value="AmpG_permease/AT-1"/>
</dbReference>
<dbReference type="InterPro" id="IPR011701">
    <property type="entry name" value="MFS"/>
</dbReference>
<dbReference type="InterPro" id="IPR020846">
    <property type="entry name" value="MFS_dom"/>
</dbReference>
<dbReference type="InterPro" id="IPR036259">
    <property type="entry name" value="MFS_trans_sf"/>
</dbReference>
<dbReference type="NCBIfam" id="TIGR00901">
    <property type="entry name" value="2A0125"/>
    <property type="match status" value="1"/>
</dbReference>
<dbReference type="PANTHER" id="PTHR12778:SF10">
    <property type="entry name" value="MAJOR FACILITATOR SUPERFAMILY DOMAIN-CONTAINING PROTEIN 3"/>
    <property type="match status" value="1"/>
</dbReference>
<dbReference type="PANTHER" id="PTHR12778">
    <property type="entry name" value="SOLUTE CARRIER FAMILY 33 ACETYL-COA TRANSPORTER -RELATED"/>
    <property type="match status" value="1"/>
</dbReference>
<dbReference type="Pfam" id="PF07690">
    <property type="entry name" value="MFS_1"/>
    <property type="match status" value="1"/>
</dbReference>
<dbReference type="SUPFAM" id="SSF103473">
    <property type="entry name" value="MFS general substrate transporter"/>
    <property type="match status" value="1"/>
</dbReference>
<dbReference type="PROSITE" id="PS50850">
    <property type="entry name" value="MFS"/>
    <property type="match status" value="1"/>
</dbReference>
<protein>
    <recommendedName>
        <fullName>Putative transporter AmpG 1</fullName>
    </recommendedName>
</protein>
<organism>
    <name type="scientific">Rickettsia felis (strain ATCC VR-1525 / URRWXCal2)</name>
    <name type="common">Rickettsia azadi</name>
    <dbReference type="NCBI Taxonomy" id="315456"/>
    <lineage>
        <taxon>Bacteria</taxon>
        <taxon>Pseudomonadati</taxon>
        <taxon>Pseudomonadota</taxon>
        <taxon>Alphaproteobacteria</taxon>
        <taxon>Rickettsiales</taxon>
        <taxon>Rickettsiaceae</taxon>
        <taxon>Rickettsieae</taxon>
        <taxon>Rickettsia</taxon>
        <taxon>spotted fever group</taxon>
    </lineage>
</organism>
<evidence type="ECO:0000250" key="1"/>
<evidence type="ECO:0000255" key="2"/>
<evidence type="ECO:0000305" key="3"/>